<protein>
    <recommendedName>
        <fullName evidence="4">Endothelin receptor type B</fullName>
        <shortName>ET-B</shortName>
        <shortName>ET-BR</shortName>
    </recommendedName>
    <alternativeName>
        <fullName>Endothelin receptor non-selective type</fullName>
    </alternativeName>
</protein>
<keyword id="KW-1003">Cell membrane</keyword>
<keyword id="KW-1015">Disulfide bond</keyword>
<keyword id="KW-0297">G-protein coupled receptor</keyword>
<keyword id="KW-0472">Membrane</keyword>
<keyword id="KW-0675">Receptor</keyword>
<keyword id="KW-1185">Reference proteome</keyword>
<keyword id="KW-0807">Transducer</keyword>
<keyword id="KW-0812">Transmembrane</keyword>
<keyword id="KW-1133">Transmembrane helix</keyword>
<proteinExistence type="evidence at transcript level"/>
<organism>
    <name type="scientific">Macaca fascicularis</name>
    <name type="common">Crab-eating macaque</name>
    <name type="synonym">Cynomolgus monkey</name>
    <dbReference type="NCBI Taxonomy" id="9541"/>
    <lineage>
        <taxon>Eukaryota</taxon>
        <taxon>Metazoa</taxon>
        <taxon>Chordata</taxon>
        <taxon>Craniata</taxon>
        <taxon>Vertebrata</taxon>
        <taxon>Euteleostomi</taxon>
        <taxon>Mammalia</taxon>
        <taxon>Eutheria</taxon>
        <taxon>Euarchontoglires</taxon>
        <taxon>Primates</taxon>
        <taxon>Haplorrhini</taxon>
        <taxon>Catarrhini</taxon>
        <taxon>Cercopithecidae</taxon>
        <taxon>Cercopithecinae</taxon>
        <taxon>Macaca</taxon>
    </lineage>
</organism>
<feature type="chain" id="PRO_0000069440" description="Endothelin receptor type B">
    <location>
        <begin position="1" status="less than"/>
        <end position="99" status="greater than"/>
    </location>
</feature>
<feature type="topological domain" description="Extracellular" evidence="2">
    <location>
        <begin position="1" status="less than"/>
        <end position="8"/>
    </location>
</feature>
<feature type="transmembrane region" description="Helical; Name=3" evidence="2">
    <location>
        <begin position="9"/>
        <end position="30"/>
    </location>
</feature>
<feature type="topological domain" description="Cytoplasmic" evidence="2">
    <location>
        <begin position="31"/>
        <end position="51"/>
    </location>
</feature>
<feature type="transmembrane region" description="Helical; Name=4" evidence="2">
    <location>
        <begin position="52"/>
        <end position="76"/>
    </location>
</feature>
<feature type="topological domain" description="Extracellular" evidence="2">
    <location>
        <begin position="77"/>
        <end position="99" status="greater than"/>
    </location>
</feature>
<feature type="disulfide bond" evidence="3">
    <location>
        <begin position="7"/>
        <end position="88"/>
    </location>
</feature>
<feature type="non-terminal residue">
    <location>
        <position position="1"/>
    </location>
</feature>
<feature type="non-terminal residue">
    <location>
        <position position="99"/>
    </location>
</feature>
<gene>
    <name type="primary">EDNRB</name>
</gene>
<comment type="function">
    <text>Non-specific receptor for endothelin 1, 2, and 3. Mediates its action by association with G proteins that activate a phosphatidylinositol-calcium second messenger system.</text>
</comment>
<comment type="subcellular location">
    <subcellularLocation>
        <location evidence="1">Cell membrane</location>
        <topology>Multi-pass membrane protein</topology>
    </subcellularLocation>
    <text evidence="1">internalized after activation by endothelins.</text>
</comment>
<comment type="similarity">
    <text evidence="3">Belongs to the G-protein coupled receptor 1 family. Endothelin receptor subfamily. EDNRB sub-subfamily.</text>
</comment>
<dbReference type="EMBL" id="U20578">
    <property type="protein sequence ID" value="AAA62437.1"/>
    <property type="molecule type" value="mRNA"/>
</dbReference>
<dbReference type="SMR" id="Q28468"/>
<dbReference type="STRING" id="9541.ENSMFAP00000004473"/>
<dbReference type="Proteomes" id="UP000233100">
    <property type="component" value="Unplaced"/>
</dbReference>
<dbReference type="GO" id="GO:0005886">
    <property type="term" value="C:plasma membrane"/>
    <property type="evidence" value="ECO:0000250"/>
    <property type="project" value="UniProtKB"/>
</dbReference>
<dbReference type="GO" id="GO:0004962">
    <property type="term" value="F:endothelin receptor activity"/>
    <property type="evidence" value="ECO:0000250"/>
    <property type="project" value="UniProtKB"/>
</dbReference>
<dbReference type="GO" id="GO:0019722">
    <property type="term" value="P:calcium-mediated signaling"/>
    <property type="evidence" value="ECO:0000250"/>
    <property type="project" value="UniProtKB"/>
</dbReference>
<dbReference type="GO" id="GO:0048066">
    <property type="term" value="P:developmental pigmentation"/>
    <property type="evidence" value="ECO:0007669"/>
    <property type="project" value="TreeGrafter"/>
</dbReference>
<dbReference type="GO" id="GO:0086100">
    <property type="term" value="P:endothelin receptor signaling pathway"/>
    <property type="evidence" value="ECO:0000250"/>
    <property type="project" value="UniProtKB"/>
</dbReference>
<dbReference type="GO" id="GO:0048484">
    <property type="term" value="P:enteric nervous system development"/>
    <property type="evidence" value="ECO:0007669"/>
    <property type="project" value="InterPro"/>
</dbReference>
<dbReference type="GO" id="GO:0008217">
    <property type="term" value="P:regulation of blood pressure"/>
    <property type="evidence" value="ECO:0007669"/>
    <property type="project" value="InterPro"/>
</dbReference>
<dbReference type="GO" id="GO:0042310">
    <property type="term" value="P:vasoconstriction"/>
    <property type="evidence" value="ECO:0007669"/>
    <property type="project" value="InterPro"/>
</dbReference>
<dbReference type="Gene3D" id="1.20.1070.10">
    <property type="entry name" value="Rhodopsin 7-helix transmembrane proteins"/>
    <property type="match status" value="1"/>
</dbReference>
<dbReference type="InterPro" id="IPR000499">
    <property type="entry name" value="Endthln_rcpt"/>
</dbReference>
<dbReference type="InterPro" id="IPR051193">
    <property type="entry name" value="GPCR_endothelin_rcpt"/>
</dbReference>
<dbReference type="InterPro" id="IPR000276">
    <property type="entry name" value="GPCR_Rhodpsn"/>
</dbReference>
<dbReference type="InterPro" id="IPR017452">
    <property type="entry name" value="GPCR_Rhodpsn_7TM"/>
</dbReference>
<dbReference type="PANTHER" id="PTHR46099:SF3">
    <property type="entry name" value="ENDOTHELIN RECEPTOR TYPE B"/>
    <property type="match status" value="1"/>
</dbReference>
<dbReference type="PANTHER" id="PTHR46099">
    <property type="entry name" value="G_PROTEIN_RECEP_F1_2 DOMAIN-CONTAINING PROTEIN"/>
    <property type="match status" value="1"/>
</dbReference>
<dbReference type="Pfam" id="PF00001">
    <property type="entry name" value="7tm_1"/>
    <property type="match status" value="1"/>
</dbReference>
<dbReference type="PRINTS" id="PR00366">
    <property type="entry name" value="ENDOTHELINR"/>
</dbReference>
<dbReference type="PRINTS" id="PR00237">
    <property type="entry name" value="GPCRRHODOPSN"/>
</dbReference>
<dbReference type="SUPFAM" id="SSF81321">
    <property type="entry name" value="Family A G protein-coupled receptor-like"/>
    <property type="match status" value="1"/>
</dbReference>
<dbReference type="PROSITE" id="PS00237">
    <property type="entry name" value="G_PROTEIN_RECEP_F1_1"/>
    <property type="match status" value="1"/>
</dbReference>
<dbReference type="PROSITE" id="PS50262">
    <property type="entry name" value="G_PROTEIN_RECEP_F1_2"/>
    <property type="match status" value="1"/>
</dbReference>
<reference key="1">
    <citation type="journal article" date="1996" name="J. Cereb. Blood Flow Metab.">
        <title>Increased expression of endothelin B receptor mRNA following subarachnoid hemorrhage in monkeys.</title>
        <authorList>
            <person name="Hino A."/>
            <person name="Tokuyama Y."/>
            <person name="Kobayashi M."/>
            <person name="Yano M."/>
            <person name="Weir B."/>
            <person name="Takeda J."/>
            <person name="Wang X."/>
            <person name="Bell G.I."/>
            <person name="Macdonald R.L."/>
        </authorList>
    </citation>
    <scope>NUCLEOTIDE SEQUENCE [MRNA]</scope>
    <source>
        <tissue>Lung</tissue>
    </source>
</reference>
<accession>Q28468</accession>
<name>EDNRB_MACFA</name>
<sequence length="99" mass="10943">PFGAEMCKLVPFIQKASVGITVLSLCALSIDRYRAVASWSRIKGIGIPKWTAVEIVLIWVVSVVLAVPEAIGFDMITMDYKGSYLRICLLHPVQKTAFM</sequence>
<evidence type="ECO:0000250" key="1">
    <source>
        <dbReference type="UniProtKB" id="P24530"/>
    </source>
</evidence>
<evidence type="ECO:0000255" key="2"/>
<evidence type="ECO:0000255" key="3">
    <source>
        <dbReference type="PROSITE-ProRule" id="PRU00521"/>
    </source>
</evidence>
<evidence type="ECO:0000305" key="4"/>